<protein>
    <recommendedName>
        <fullName evidence="1">2-isopropylmalate synthase</fullName>
        <ecNumber evidence="1">2.3.3.13</ecNumber>
    </recommendedName>
    <alternativeName>
        <fullName evidence="1">Alpha-IPM synthase</fullName>
    </alternativeName>
    <alternativeName>
        <fullName evidence="1">Alpha-isopropylmalate synthase</fullName>
    </alternativeName>
</protein>
<geneLocation type="plasmid">
    <name>pLeu-Dn</name>
    <name>pBDn1</name>
</geneLocation>
<gene>
    <name evidence="1" type="primary">leuA</name>
</gene>
<dbReference type="EC" id="2.3.3.13" evidence="1"/>
<dbReference type="EMBL" id="AF041837">
    <property type="protein sequence ID" value="AAD12600.1"/>
    <property type="molecule type" value="Genomic_DNA"/>
</dbReference>
<dbReference type="EMBL" id="AJ006880">
    <property type="protein sequence ID" value="CAA07311.1"/>
    <property type="molecule type" value="Genomic_DNA"/>
</dbReference>
<dbReference type="RefSeq" id="NP_047187.1">
    <property type="nucleotide sequence ID" value="NC_001911.1"/>
</dbReference>
<dbReference type="SMR" id="O85070"/>
<dbReference type="UniPathway" id="UPA00048">
    <property type="reaction ID" value="UER00070"/>
</dbReference>
<dbReference type="GO" id="GO:0005829">
    <property type="term" value="C:cytosol"/>
    <property type="evidence" value="ECO:0007669"/>
    <property type="project" value="TreeGrafter"/>
</dbReference>
<dbReference type="GO" id="GO:0003852">
    <property type="term" value="F:2-isopropylmalate synthase activity"/>
    <property type="evidence" value="ECO:0007669"/>
    <property type="project" value="UniProtKB-UniRule"/>
</dbReference>
<dbReference type="GO" id="GO:0003985">
    <property type="term" value="F:acetyl-CoA C-acetyltransferase activity"/>
    <property type="evidence" value="ECO:0007669"/>
    <property type="project" value="UniProtKB-UniRule"/>
</dbReference>
<dbReference type="GO" id="GO:0030145">
    <property type="term" value="F:manganese ion binding"/>
    <property type="evidence" value="ECO:0007669"/>
    <property type="project" value="UniProtKB-UniRule"/>
</dbReference>
<dbReference type="GO" id="GO:0009098">
    <property type="term" value="P:L-leucine biosynthetic process"/>
    <property type="evidence" value="ECO:0007669"/>
    <property type="project" value="UniProtKB-UniRule"/>
</dbReference>
<dbReference type="CDD" id="cd07940">
    <property type="entry name" value="DRE_TIM_IPMS"/>
    <property type="match status" value="1"/>
</dbReference>
<dbReference type="FunFam" id="1.10.238.260:FF:000001">
    <property type="entry name" value="2-isopropylmalate synthase"/>
    <property type="match status" value="1"/>
</dbReference>
<dbReference type="FunFam" id="3.20.20.70:FF:000010">
    <property type="entry name" value="2-isopropylmalate synthase"/>
    <property type="match status" value="1"/>
</dbReference>
<dbReference type="FunFam" id="3.30.160.270:FF:000001">
    <property type="entry name" value="2-isopropylmalate synthase"/>
    <property type="match status" value="1"/>
</dbReference>
<dbReference type="Gene3D" id="1.10.238.260">
    <property type="match status" value="1"/>
</dbReference>
<dbReference type="Gene3D" id="3.30.160.270">
    <property type="match status" value="1"/>
</dbReference>
<dbReference type="Gene3D" id="3.20.20.70">
    <property type="entry name" value="Aldolase class I"/>
    <property type="match status" value="1"/>
</dbReference>
<dbReference type="HAMAP" id="MF_01025">
    <property type="entry name" value="LeuA_type1"/>
    <property type="match status" value="1"/>
</dbReference>
<dbReference type="InterPro" id="IPR050073">
    <property type="entry name" value="2-IPM_HCS-like"/>
</dbReference>
<dbReference type="InterPro" id="IPR013709">
    <property type="entry name" value="2-isopropylmalate_synth_dimer"/>
</dbReference>
<dbReference type="InterPro" id="IPR002034">
    <property type="entry name" value="AIPM/Hcit_synth_CS"/>
</dbReference>
<dbReference type="InterPro" id="IPR013785">
    <property type="entry name" value="Aldolase_TIM"/>
</dbReference>
<dbReference type="InterPro" id="IPR054691">
    <property type="entry name" value="LeuA/HCS_post-cat"/>
</dbReference>
<dbReference type="InterPro" id="IPR036230">
    <property type="entry name" value="LeuA_allosteric_dom_sf"/>
</dbReference>
<dbReference type="InterPro" id="IPR005671">
    <property type="entry name" value="LeuA_bact_synth"/>
</dbReference>
<dbReference type="InterPro" id="IPR000891">
    <property type="entry name" value="PYR_CT"/>
</dbReference>
<dbReference type="NCBIfam" id="TIGR00973">
    <property type="entry name" value="leuA_bact"/>
    <property type="match status" value="1"/>
</dbReference>
<dbReference type="NCBIfam" id="NF002084">
    <property type="entry name" value="PRK00915.1-1"/>
    <property type="match status" value="1"/>
</dbReference>
<dbReference type="NCBIfam" id="NF002086">
    <property type="entry name" value="PRK00915.1-3"/>
    <property type="match status" value="1"/>
</dbReference>
<dbReference type="PANTHER" id="PTHR10277:SF9">
    <property type="entry name" value="2-ISOPROPYLMALATE SYNTHASE 1, CHLOROPLASTIC-RELATED"/>
    <property type="match status" value="1"/>
</dbReference>
<dbReference type="PANTHER" id="PTHR10277">
    <property type="entry name" value="HOMOCITRATE SYNTHASE-RELATED"/>
    <property type="match status" value="1"/>
</dbReference>
<dbReference type="Pfam" id="PF22617">
    <property type="entry name" value="HCS_D2"/>
    <property type="match status" value="1"/>
</dbReference>
<dbReference type="Pfam" id="PF00682">
    <property type="entry name" value="HMGL-like"/>
    <property type="match status" value="1"/>
</dbReference>
<dbReference type="Pfam" id="PF08502">
    <property type="entry name" value="LeuA_dimer"/>
    <property type="match status" value="1"/>
</dbReference>
<dbReference type="SMART" id="SM00917">
    <property type="entry name" value="LeuA_dimer"/>
    <property type="match status" value="1"/>
</dbReference>
<dbReference type="SUPFAM" id="SSF110921">
    <property type="entry name" value="2-isopropylmalate synthase LeuA, allosteric (dimerisation) domain"/>
    <property type="match status" value="1"/>
</dbReference>
<dbReference type="SUPFAM" id="SSF51569">
    <property type="entry name" value="Aldolase"/>
    <property type="match status" value="1"/>
</dbReference>
<dbReference type="PROSITE" id="PS00815">
    <property type="entry name" value="AIPM_HOMOCIT_SYNTH_1"/>
    <property type="match status" value="1"/>
</dbReference>
<dbReference type="PROSITE" id="PS00816">
    <property type="entry name" value="AIPM_HOMOCIT_SYNTH_2"/>
    <property type="match status" value="1"/>
</dbReference>
<dbReference type="PROSITE" id="PS50991">
    <property type="entry name" value="PYR_CT"/>
    <property type="match status" value="1"/>
</dbReference>
<reference key="1">
    <citation type="journal article" date="1999" name="J. Mol. Evol.">
        <title>Genetic characterization of plasmids containing genes encoding enzymes of leucine biosynthesis in endosymbionts (Buchnera) of aphids.</title>
        <authorList>
            <person name="Baumann L."/>
            <person name="Baumann P."/>
            <person name="Moran N.A."/>
            <person name="Sandstroem J.P."/>
            <person name="Thao M.L."/>
        </authorList>
    </citation>
    <scope>NUCLEOTIDE SEQUENCE [GENOMIC DNA]</scope>
</reference>
<reference key="2">
    <citation type="journal article" date="1998" name="FEMS Microbiol. Lett.">
        <title>Structure and evolution of the leucine plasmids carried by the endosymbiont (Buchnera aphidicola) from aphids of the family Aphididae.</title>
        <authorList>
            <person name="Silva F.J."/>
            <person name="van Ham R.C.H.J."/>
            <person name="Sabater B."/>
            <person name="Latorre A."/>
        </authorList>
    </citation>
    <scope>NUCLEOTIDE SEQUENCE [GENOMIC DNA] OF 1-13</scope>
</reference>
<keyword id="KW-0028">Amino-acid biosynthesis</keyword>
<keyword id="KW-0100">Branched-chain amino acid biosynthesis</keyword>
<keyword id="KW-0963">Cytoplasm</keyword>
<keyword id="KW-0432">Leucine biosynthesis</keyword>
<keyword id="KW-0464">Manganese</keyword>
<keyword id="KW-0479">Metal-binding</keyword>
<keyword id="KW-0614">Plasmid</keyword>
<keyword id="KW-0808">Transferase</keyword>
<comment type="function">
    <text evidence="1">Catalyzes the condensation of the acetyl group of acetyl-CoA with 3-methyl-2-oxobutanoate (2-ketoisovalerate) to form 3-carboxy-3-hydroxy-4-methylpentanoate (2-isopropylmalate).</text>
</comment>
<comment type="catalytic activity">
    <reaction evidence="1">
        <text>3-methyl-2-oxobutanoate + acetyl-CoA + H2O = (2S)-2-isopropylmalate + CoA + H(+)</text>
        <dbReference type="Rhea" id="RHEA:21524"/>
        <dbReference type="ChEBI" id="CHEBI:1178"/>
        <dbReference type="ChEBI" id="CHEBI:11851"/>
        <dbReference type="ChEBI" id="CHEBI:15377"/>
        <dbReference type="ChEBI" id="CHEBI:15378"/>
        <dbReference type="ChEBI" id="CHEBI:57287"/>
        <dbReference type="ChEBI" id="CHEBI:57288"/>
        <dbReference type="EC" id="2.3.3.13"/>
    </reaction>
</comment>
<comment type="cofactor">
    <cofactor evidence="1">
        <name>Mn(2+)</name>
        <dbReference type="ChEBI" id="CHEBI:29035"/>
    </cofactor>
</comment>
<comment type="pathway">
    <text evidence="1">Amino-acid biosynthesis; L-leucine biosynthesis; L-leucine from 3-methyl-2-oxobutanoate: step 1/4.</text>
</comment>
<comment type="subunit">
    <text evidence="1">Homodimer.</text>
</comment>
<comment type="subcellular location">
    <subcellularLocation>
        <location evidence="1">Cytoplasm</location>
    </subcellularLocation>
</comment>
<comment type="similarity">
    <text evidence="1">Belongs to the alpha-IPM synthase/homocitrate synthase family. LeuA type 1 subfamily.</text>
</comment>
<proteinExistence type="inferred from homology"/>
<name>LEU1_BUCDN</name>
<feature type="chain" id="PRO_0000140337" description="2-isopropylmalate synthase">
    <location>
        <begin position="1"/>
        <end position="516"/>
    </location>
</feature>
<feature type="domain" description="Pyruvate carboxyltransferase" evidence="1">
    <location>
        <begin position="5"/>
        <end position="267"/>
    </location>
</feature>
<feature type="region of interest" description="Regulatory domain" evidence="1">
    <location>
        <begin position="392"/>
        <end position="516"/>
    </location>
</feature>
<feature type="binding site" evidence="1">
    <location>
        <position position="14"/>
    </location>
    <ligand>
        <name>Mn(2+)</name>
        <dbReference type="ChEBI" id="CHEBI:29035"/>
    </ligand>
</feature>
<feature type="binding site" evidence="1">
    <location>
        <position position="202"/>
    </location>
    <ligand>
        <name>Mn(2+)</name>
        <dbReference type="ChEBI" id="CHEBI:29035"/>
    </ligand>
</feature>
<feature type="binding site" evidence="1">
    <location>
        <position position="204"/>
    </location>
    <ligand>
        <name>Mn(2+)</name>
        <dbReference type="ChEBI" id="CHEBI:29035"/>
    </ligand>
</feature>
<feature type="binding site" evidence="1">
    <location>
        <position position="238"/>
    </location>
    <ligand>
        <name>Mn(2+)</name>
        <dbReference type="ChEBI" id="CHEBI:29035"/>
    </ligand>
</feature>
<organism>
    <name type="scientific">Buchnera aphidicola subsp. Diuraphis noxia</name>
    <dbReference type="NCBI Taxonomy" id="118101"/>
    <lineage>
        <taxon>Bacteria</taxon>
        <taxon>Pseudomonadati</taxon>
        <taxon>Pseudomonadota</taxon>
        <taxon>Gammaproteobacteria</taxon>
        <taxon>Enterobacterales</taxon>
        <taxon>Erwiniaceae</taxon>
        <taxon>Buchnera</taxon>
    </lineage>
</organism>
<accession>O85070</accession>
<sequence length="516" mass="57259">MSSKVIIFDTTLRDGEQALQASLSVKEKLQIALSLEKCGIDIIEVGFPISSPGDFKSVQTISKKIKNSRICSLARCVEKDIEVAGDAMSSSDFFRIHIFLATSTLHMESKLRKNFDEIIDMAVSSVKKALRYTDDVEFSCEDASRTTMDNLCRIVEKLIKAGVKTINIPDTVGYTIPNELSNIIKNLFERVPNIHKSIISVHCHNDLGMAVGNSISAIQAGARQIEGTINGIGERAGNTALEEIIMAIKVREDILGVSTNIVHKEIYRTSQIISQICNMPIPANKAIVGSNAFAHSSGIHQDGVLKNRKNYEIMEPNTIGVKEVKLNLTSRSGRAAVKYYMDKMGYKDDDYDIDELYSAFLKLADKKGQVFDYDLEALAIFSKKQENAEYFYLKFFSVQSISNGLSTASVKLKCGKKVYTESSTTSNGPVDATYQALNKIINFPITLQKFQLVAKGKGKDALGQVDILVKYENRQFHGIGLATDIIESSAQAMINVLNNIWKSQQVNKKLKNLKKY</sequence>
<evidence type="ECO:0000255" key="1">
    <source>
        <dbReference type="HAMAP-Rule" id="MF_01025"/>
    </source>
</evidence>